<comment type="function">
    <text evidence="1">Component of the cytosolic iron-sulfur (Fe-S) protein assembly (CIA) machinery. Required for the maturation of extramitochondrial Fe-S proteins. Part of an electron transfer chain functioning in an early step of cytosolic Fe-S biogenesis, facilitating the de novo assembly of a [4Fe-4S] cluster on the cytosolic Fe-S scaffold complex. Electrons are transferred from NADPH via a FAD- and FMN-containing diflavin oxidoreductase. Together with the diflavin oxidoreductase, also required for the assembly of the diferric tyrosyl radical cofactor of ribonucleotide reductase (RNR), probably by providing electrons for reduction during radical cofactor maturation in the catalytic small subunit.</text>
</comment>
<comment type="cofactor">
    <cofactor evidence="1">
        <name>[2Fe-2S] cluster</name>
        <dbReference type="ChEBI" id="CHEBI:190135"/>
    </cofactor>
</comment>
<comment type="cofactor">
    <cofactor evidence="1">
        <name>[4Fe-4S] cluster</name>
        <dbReference type="ChEBI" id="CHEBI:49883"/>
    </cofactor>
</comment>
<comment type="subunit">
    <text evidence="1">Monomer.</text>
</comment>
<comment type="subcellular location">
    <subcellularLocation>
        <location evidence="1">Cytoplasm</location>
    </subcellularLocation>
    <subcellularLocation>
        <location evidence="1">Mitochondrion intermembrane space</location>
    </subcellularLocation>
</comment>
<comment type="domain">
    <text evidence="1">The C-terminal domain binds 2 Fe-S clusters but is otherwise mostly in an intrinsically disordered conformation.</text>
</comment>
<comment type="domain">
    <text evidence="1">The N-terminal domain has structural similarity with S-adenosyl-L-methionine-dependent methyltransferases, but does not bind S-adenosyl-L-methionine. It is required for correct assembly of the 2 Fe-S clusters.</text>
</comment>
<comment type="domain">
    <text evidence="1">The twin Cx2C motifs are involved in the recognition by the mitochondrial MIA40-ERV1 disulfide relay system. The formation of 2 disulfide bonds in the Cx2C motifs through dithiol/disulfide exchange reactions effectively traps the protein in the mitochondrial intermembrane space.</text>
</comment>
<comment type="similarity">
    <text evidence="1">Belongs to the anamorsin family.</text>
</comment>
<gene>
    <name type="ORF">PHATRDRAFT_47020</name>
</gene>
<keyword id="KW-0001">2Fe-2S</keyword>
<keyword id="KW-0004">4Fe-4S</keyword>
<keyword id="KW-0963">Cytoplasm</keyword>
<keyword id="KW-0408">Iron</keyword>
<keyword id="KW-0411">Iron-sulfur</keyword>
<keyword id="KW-0479">Metal-binding</keyword>
<keyword id="KW-0496">Mitochondrion</keyword>
<keyword id="KW-1185">Reference proteome</keyword>
<name>DRE2_PHATC</name>
<protein>
    <recommendedName>
        <fullName evidence="1">Anamorsin homolog</fullName>
    </recommendedName>
    <alternativeName>
        <fullName evidence="1">Fe-S cluster assembly protein DRE2 homolog</fullName>
    </alternativeName>
</protein>
<evidence type="ECO:0000255" key="1">
    <source>
        <dbReference type="HAMAP-Rule" id="MF_03115"/>
    </source>
</evidence>
<evidence type="ECO:0000256" key="2">
    <source>
        <dbReference type="SAM" id="MobiDB-lite"/>
    </source>
</evidence>
<reference key="1">
    <citation type="journal article" date="2008" name="Nature">
        <title>The Phaeodactylum genome reveals the evolutionary history of diatom genomes.</title>
        <authorList>
            <person name="Bowler C."/>
            <person name="Allen A.E."/>
            <person name="Badger J.H."/>
            <person name="Grimwood J."/>
            <person name="Jabbari K."/>
            <person name="Kuo A."/>
            <person name="Maheswari U."/>
            <person name="Martens C."/>
            <person name="Maumus F."/>
            <person name="Otillar R.P."/>
            <person name="Rayko E."/>
            <person name="Salamov A."/>
            <person name="Vandepoele K."/>
            <person name="Beszteri B."/>
            <person name="Gruber A."/>
            <person name="Heijde M."/>
            <person name="Katinka M."/>
            <person name="Mock T."/>
            <person name="Valentin K."/>
            <person name="Verret F."/>
            <person name="Berges J.A."/>
            <person name="Brownlee C."/>
            <person name="Cadoret J.P."/>
            <person name="Chiovitti A."/>
            <person name="Choi C.J."/>
            <person name="Coesel S."/>
            <person name="De Martino A."/>
            <person name="Detter J.C."/>
            <person name="Durkin C."/>
            <person name="Falciatore A."/>
            <person name="Fournet J."/>
            <person name="Haruta M."/>
            <person name="Huysman M.J."/>
            <person name="Jenkins B.D."/>
            <person name="Jiroutova K."/>
            <person name="Jorgensen R.E."/>
            <person name="Joubert Y."/>
            <person name="Kaplan A."/>
            <person name="Kroger N."/>
            <person name="Kroth P.G."/>
            <person name="La Roche J."/>
            <person name="Lindquist E."/>
            <person name="Lommer M."/>
            <person name="Martin-Jezequel V."/>
            <person name="Lopez P.J."/>
            <person name="Lucas S."/>
            <person name="Mangogna M."/>
            <person name="McGinnis K."/>
            <person name="Medlin L.K."/>
            <person name="Montsant A."/>
            <person name="Oudot-Le Secq M.P."/>
            <person name="Napoli C."/>
            <person name="Obornik M."/>
            <person name="Parker M.S."/>
            <person name="Petit J.L."/>
            <person name="Porcel B.M."/>
            <person name="Poulsen N."/>
            <person name="Robison M."/>
            <person name="Rychlewski L."/>
            <person name="Rynearson T.A."/>
            <person name="Schmutz J."/>
            <person name="Shapiro H."/>
            <person name="Siaut M."/>
            <person name="Stanley M."/>
            <person name="Sussman M.R."/>
            <person name="Taylor A.R."/>
            <person name="Vardi A."/>
            <person name="von Dassow P."/>
            <person name="Vyverman W."/>
            <person name="Willis A."/>
            <person name="Wyrwicz L.S."/>
            <person name="Rokhsar D.S."/>
            <person name="Weissenbach J."/>
            <person name="Armbrust E.V."/>
            <person name="Green B.R."/>
            <person name="Van de Peer Y."/>
            <person name="Grigoriev I.V."/>
        </authorList>
    </citation>
    <scope>NUCLEOTIDE SEQUENCE [LARGE SCALE GENOMIC DNA]</scope>
    <source>
        <strain>CCAP 1055/1</strain>
    </source>
</reference>
<reference key="2">
    <citation type="submission" date="2008-08" db="EMBL/GenBank/DDBJ databases">
        <authorList>
            <consortium name="Diatom Consortium"/>
            <person name="Grigoriev I."/>
            <person name="Grimwood J."/>
            <person name="Kuo A."/>
            <person name="Otillar R.P."/>
            <person name="Salamov A."/>
            <person name="Detter J.C."/>
            <person name="Lindquist E."/>
            <person name="Shapiro H."/>
            <person name="Lucas S."/>
            <person name="Glavina del Rio T."/>
            <person name="Pitluck S."/>
            <person name="Rokhsar D."/>
            <person name="Bowler C."/>
        </authorList>
    </citation>
    <scope>GENOME REANNOTATION</scope>
    <source>
        <strain>CCAP 1055/1</strain>
    </source>
</reference>
<sequence>MVPPREDVTVRIVCERRRTAGKEARPPPSAKPTPGNTSSHPNAKETHRSNEPFFRLYTKQSHRRSIMASTLCVVLGSASSTDPAAISAATMTDAAAKTIHDAIYESLELVVVASELADVYDSMELSRFTKILSPNATVSVSVIGDATKSLSPIHTSFLLAGLANNSERRNADGSRTLTATRRNNTTNSVATLNFASNNNNGNDLLIDEDNLLTDASNLLGAPPSMSAAATKSGDDCSGRAPCDDCTCGRAEGAKEGNSEQPKEIKSSSCGKCSLGDAFRCASCPYLGKPAFKPGEEHLVLDLQDDF</sequence>
<feature type="chain" id="PRO_0000392370" description="Anamorsin homolog">
    <location>
        <begin position="1"/>
        <end position="306"/>
    </location>
</feature>
<feature type="region of interest" description="Disordered" evidence="2">
    <location>
        <begin position="1"/>
        <end position="51"/>
    </location>
</feature>
<feature type="region of interest" description="N-terminal SAM-like domain" evidence="1">
    <location>
        <begin position="59"/>
        <end position="190"/>
    </location>
</feature>
<feature type="region of interest" description="Linker" evidence="1">
    <location>
        <begin position="191"/>
        <end position="218"/>
    </location>
</feature>
<feature type="region of interest" description="Fe-S binding site A" evidence="1">
    <location>
        <begin position="236"/>
        <end position="247"/>
    </location>
</feature>
<feature type="region of interest" description="Disordered" evidence="2">
    <location>
        <begin position="252"/>
        <end position="272"/>
    </location>
</feature>
<feature type="region of interest" description="Fe-S binding site B" evidence="1">
    <location>
        <begin position="269"/>
        <end position="283"/>
    </location>
</feature>
<feature type="short sequence motif" description="Cx2C motif 1" evidence="1">
    <location>
        <begin position="269"/>
        <end position="272"/>
    </location>
</feature>
<feature type="short sequence motif" description="Cx2C motif 2" evidence="1">
    <location>
        <begin position="280"/>
        <end position="283"/>
    </location>
</feature>
<feature type="compositionally biased region" description="Basic and acidic residues" evidence="2">
    <location>
        <begin position="1"/>
        <end position="25"/>
    </location>
</feature>
<feature type="compositionally biased region" description="Basic and acidic residues" evidence="2">
    <location>
        <begin position="252"/>
        <end position="265"/>
    </location>
</feature>
<feature type="binding site" evidence="1">
    <location>
        <position position="236"/>
    </location>
    <ligand>
        <name>[2Fe-2S] cluster</name>
        <dbReference type="ChEBI" id="CHEBI:190135"/>
    </ligand>
</feature>
<feature type="binding site" evidence="1">
    <location>
        <position position="242"/>
    </location>
    <ligand>
        <name>[2Fe-2S] cluster</name>
        <dbReference type="ChEBI" id="CHEBI:190135"/>
    </ligand>
</feature>
<feature type="binding site" evidence="1">
    <location>
        <position position="245"/>
    </location>
    <ligand>
        <name>[2Fe-2S] cluster</name>
        <dbReference type="ChEBI" id="CHEBI:190135"/>
    </ligand>
</feature>
<feature type="binding site" evidence="1">
    <location>
        <position position="247"/>
    </location>
    <ligand>
        <name>[2Fe-2S] cluster</name>
        <dbReference type="ChEBI" id="CHEBI:190135"/>
    </ligand>
</feature>
<feature type="binding site" evidence="1">
    <location>
        <position position="269"/>
    </location>
    <ligand>
        <name>[4Fe-4S] cluster</name>
        <dbReference type="ChEBI" id="CHEBI:49883"/>
    </ligand>
</feature>
<feature type="binding site" evidence="1">
    <location>
        <position position="272"/>
    </location>
    <ligand>
        <name>[4Fe-4S] cluster</name>
        <dbReference type="ChEBI" id="CHEBI:49883"/>
    </ligand>
</feature>
<feature type="binding site" evidence="1">
    <location>
        <position position="280"/>
    </location>
    <ligand>
        <name>[4Fe-4S] cluster</name>
        <dbReference type="ChEBI" id="CHEBI:49883"/>
    </ligand>
</feature>
<feature type="binding site" evidence="1">
    <location>
        <position position="283"/>
    </location>
    <ligand>
        <name>[4Fe-4S] cluster</name>
        <dbReference type="ChEBI" id="CHEBI:49883"/>
    </ligand>
</feature>
<accession>B7G267</accession>
<organism>
    <name type="scientific">Phaeodactylum tricornutum (strain CCAP 1055/1)</name>
    <dbReference type="NCBI Taxonomy" id="556484"/>
    <lineage>
        <taxon>Eukaryota</taxon>
        <taxon>Sar</taxon>
        <taxon>Stramenopiles</taxon>
        <taxon>Ochrophyta</taxon>
        <taxon>Bacillariophyta</taxon>
        <taxon>Bacillariophyceae</taxon>
        <taxon>Bacillariophycidae</taxon>
        <taxon>Naviculales</taxon>
        <taxon>Phaeodactylaceae</taxon>
        <taxon>Phaeodactylum</taxon>
    </lineage>
</organism>
<proteinExistence type="inferred from homology"/>
<dbReference type="EMBL" id="CM000614">
    <property type="protein sequence ID" value="EEC47079.1"/>
    <property type="molecule type" value="Genomic_DNA"/>
</dbReference>
<dbReference type="RefSeq" id="XP_002181156.1">
    <property type="nucleotide sequence ID" value="XM_002181120.1"/>
</dbReference>
<dbReference type="STRING" id="556484.B7G267"/>
<dbReference type="PaxDb" id="2850-Phatr47020"/>
<dbReference type="EnsemblProtists" id="Phatr3_J47020.t1">
    <property type="protein sequence ID" value="Phatr3_J47020.p1"/>
    <property type="gene ID" value="Phatr3_J47020"/>
</dbReference>
<dbReference type="GeneID" id="7202251"/>
<dbReference type="KEGG" id="pti:PHATRDRAFT_47020"/>
<dbReference type="eggNOG" id="KOG4020">
    <property type="taxonomic scope" value="Eukaryota"/>
</dbReference>
<dbReference type="HOGENOM" id="CLU_910490_0_0_1"/>
<dbReference type="InParanoid" id="B7G267"/>
<dbReference type="OMA" id="KACDNCT"/>
<dbReference type="OrthoDB" id="311633at2759"/>
<dbReference type="Proteomes" id="UP000000759">
    <property type="component" value="Chromosome 12"/>
</dbReference>
<dbReference type="GO" id="GO:0005758">
    <property type="term" value="C:mitochondrial intermembrane space"/>
    <property type="evidence" value="ECO:0007669"/>
    <property type="project" value="UniProtKB-SubCell"/>
</dbReference>
<dbReference type="GO" id="GO:0051537">
    <property type="term" value="F:2 iron, 2 sulfur cluster binding"/>
    <property type="evidence" value="ECO:0007669"/>
    <property type="project" value="UniProtKB-UniRule"/>
</dbReference>
<dbReference type="GO" id="GO:0051539">
    <property type="term" value="F:4 iron, 4 sulfur cluster binding"/>
    <property type="evidence" value="ECO:0007669"/>
    <property type="project" value="UniProtKB-KW"/>
</dbReference>
<dbReference type="GO" id="GO:0009055">
    <property type="term" value="F:electron transfer activity"/>
    <property type="evidence" value="ECO:0007669"/>
    <property type="project" value="UniProtKB-UniRule"/>
</dbReference>
<dbReference type="GO" id="GO:0046872">
    <property type="term" value="F:metal ion binding"/>
    <property type="evidence" value="ECO:0007669"/>
    <property type="project" value="UniProtKB-KW"/>
</dbReference>
<dbReference type="GO" id="GO:0016226">
    <property type="term" value="P:iron-sulfur cluster assembly"/>
    <property type="evidence" value="ECO:0007669"/>
    <property type="project" value="UniProtKB-UniRule"/>
</dbReference>
<dbReference type="HAMAP" id="MF_03115">
    <property type="entry name" value="Anamorsin"/>
    <property type="match status" value="1"/>
</dbReference>
<dbReference type="InterPro" id="IPR007785">
    <property type="entry name" value="Anamorsin"/>
</dbReference>
<dbReference type="InterPro" id="IPR046408">
    <property type="entry name" value="CIAPIN1"/>
</dbReference>
<dbReference type="PANTHER" id="PTHR13273">
    <property type="entry name" value="ANAMORSIN"/>
    <property type="match status" value="1"/>
</dbReference>
<dbReference type="PANTHER" id="PTHR13273:SF14">
    <property type="entry name" value="ANAMORSIN"/>
    <property type="match status" value="1"/>
</dbReference>
<dbReference type="Pfam" id="PF05093">
    <property type="entry name" value="CIAPIN1"/>
    <property type="match status" value="1"/>
</dbReference>